<accession>A9M5I2</accession>
<evidence type="ECO:0000255" key="1">
    <source>
        <dbReference type="HAMAP-Rule" id="MF_00302"/>
    </source>
</evidence>
<evidence type="ECO:0000256" key="2">
    <source>
        <dbReference type="SAM" id="MobiDB-lite"/>
    </source>
</evidence>
<comment type="function">
    <text evidence="1">Involved in the modulation of the specificity of the ClpAP-mediated ATP-dependent protein degradation.</text>
</comment>
<comment type="subunit">
    <text evidence="1">Binds to the N-terminal domain of the chaperone ClpA.</text>
</comment>
<comment type="similarity">
    <text evidence="1">Belongs to the ClpS family.</text>
</comment>
<name>CLPS_BRUC2</name>
<dbReference type="EMBL" id="CP000872">
    <property type="protein sequence ID" value="ABX62237.1"/>
    <property type="molecule type" value="Genomic_DNA"/>
</dbReference>
<dbReference type="RefSeq" id="WP_002964297.1">
    <property type="nucleotide sequence ID" value="NC_010103.1"/>
</dbReference>
<dbReference type="SMR" id="A9M5I2"/>
<dbReference type="GeneID" id="97533580"/>
<dbReference type="KEGG" id="bcs:BCAN_A1188"/>
<dbReference type="HOGENOM" id="CLU_134358_0_0_5"/>
<dbReference type="PhylomeDB" id="A9M5I2"/>
<dbReference type="Proteomes" id="UP000001385">
    <property type="component" value="Chromosome I"/>
</dbReference>
<dbReference type="GO" id="GO:0030163">
    <property type="term" value="P:protein catabolic process"/>
    <property type="evidence" value="ECO:0007669"/>
    <property type="project" value="InterPro"/>
</dbReference>
<dbReference type="GO" id="GO:0006508">
    <property type="term" value="P:proteolysis"/>
    <property type="evidence" value="ECO:0007669"/>
    <property type="project" value="UniProtKB-UniRule"/>
</dbReference>
<dbReference type="FunFam" id="3.30.1390.10:FF:000002">
    <property type="entry name" value="ATP-dependent Clp protease adapter protein ClpS"/>
    <property type="match status" value="1"/>
</dbReference>
<dbReference type="Gene3D" id="3.30.1390.10">
    <property type="match status" value="1"/>
</dbReference>
<dbReference type="HAMAP" id="MF_00302">
    <property type="entry name" value="ClpS"/>
    <property type="match status" value="1"/>
</dbReference>
<dbReference type="InterPro" id="IPR022935">
    <property type="entry name" value="ClpS"/>
</dbReference>
<dbReference type="InterPro" id="IPR003769">
    <property type="entry name" value="ClpS_core"/>
</dbReference>
<dbReference type="InterPro" id="IPR014719">
    <property type="entry name" value="Ribosomal_bL12_C/ClpS-like"/>
</dbReference>
<dbReference type="NCBIfam" id="NF000669">
    <property type="entry name" value="PRK00033.1-2"/>
    <property type="match status" value="1"/>
</dbReference>
<dbReference type="NCBIfam" id="NF000672">
    <property type="entry name" value="PRK00033.1-5"/>
    <property type="match status" value="1"/>
</dbReference>
<dbReference type="PANTHER" id="PTHR33473:SF19">
    <property type="entry name" value="ATP-DEPENDENT CLP PROTEASE ADAPTER PROTEIN CLPS"/>
    <property type="match status" value="1"/>
</dbReference>
<dbReference type="PANTHER" id="PTHR33473">
    <property type="entry name" value="ATP-DEPENDENT CLP PROTEASE ADAPTER PROTEIN CLPS1, CHLOROPLASTIC"/>
    <property type="match status" value="1"/>
</dbReference>
<dbReference type="Pfam" id="PF02617">
    <property type="entry name" value="ClpS"/>
    <property type="match status" value="1"/>
</dbReference>
<dbReference type="SUPFAM" id="SSF54736">
    <property type="entry name" value="ClpS-like"/>
    <property type="match status" value="1"/>
</dbReference>
<keyword id="KW-1185">Reference proteome</keyword>
<feature type="chain" id="PRO_1000079020" description="ATP-dependent Clp protease adapter protein ClpS">
    <location>
        <begin position="1"/>
        <end position="116"/>
    </location>
</feature>
<feature type="region of interest" description="Disordered" evidence="2">
    <location>
        <begin position="1"/>
        <end position="23"/>
    </location>
</feature>
<feature type="compositionally biased region" description="Polar residues" evidence="2">
    <location>
        <begin position="1"/>
        <end position="11"/>
    </location>
</feature>
<protein>
    <recommendedName>
        <fullName evidence="1">ATP-dependent Clp protease adapter protein ClpS</fullName>
    </recommendedName>
</protein>
<proteinExistence type="inferred from homology"/>
<sequence length="116" mass="13303">MRRINTIMQGKTNGGNGPESGTVVVTRTQPKTRKPSLYRVLLLNDDYTPMEFVVHVLQRFFQKNLDDATRIMLHVHNHGVGECGVFTYEVAETKVSQVMDFARQNQHPLQCVMEKK</sequence>
<reference key="1">
    <citation type="submission" date="2007-10" db="EMBL/GenBank/DDBJ databases">
        <title>Brucella canis ATCC 23365 whole genome shotgun sequencing project.</title>
        <authorList>
            <person name="Setubal J.C."/>
            <person name="Bowns C."/>
            <person name="Boyle S."/>
            <person name="Crasta O.R."/>
            <person name="Czar M.J."/>
            <person name="Dharmanolla C."/>
            <person name="Gillespie J.J."/>
            <person name="Kenyon R.W."/>
            <person name="Lu J."/>
            <person name="Mane S."/>
            <person name="Mohapatra S."/>
            <person name="Nagrani S."/>
            <person name="Purkayastha A."/>
            <person name="Rajasimha H.K."/>
            <person name="Shallom J.M."/>
            <person name="Shallom S."/>
            <person name="Shukla M."/>
            <person name="Snyder E.E."/>
            <person name="Sobral B.W."/>
            <person name="Wattam A.R."/>
            <person name="Will R."/>
            <person name="Williams K."/>
            <person name="Yoo H."/>
            <person name="Bruce D."/>
            <person name="Detter C."/>
            <person name="Munk C."/>
            <person name="Brettin T.S."/>
        </authorList>
    </citation>
    <scope>NUCLEOTIDE SEQUENCE [LARGE SCALE GENOMIC DNA]</scope>
    <source>
        <strain>ATCC 23365 / NCTC 10854 / RM-666</strain>
    </source>
</reference>
<organism>
    <name type="scientific">Brucella canis (strain ATCC 23365 / NCTC 10854 / RM-666)</name>
    <dbReference type="NCBI Taxonomy" id="483179"/>
    <lineage>
        <taxon>Bacteria</taxon>
        <taxon>Pseudomonadati</taxon>
        <taxon>Pseudomonadota</taxon>
        <taxon>Alphaproteobacteria</taxon>
        <taxon>Hyphomicrobiales</taxon>
        <taxon>Brucellaceae</taxon>
        <taxon>Brucella/Ochrobactrum group</taxon>
        <taxon>Brucella</taxon>
    </lineage>
</organism>
<gene>
    <name evidence="1" type="primary">clpS</name>
    <name type="ordered locus">BCAN_A1188</name>
</gene>